<comment type="function">
    <text evidence="1">Cell wall formation. Catalyzes the addition of glutamate to the nucleotide precursor UDP-N-acetylmuramoyl-L-alanine (UMA).</text>
</comment>
<comment type="catalytic activity">
    <reaction evidence="1">
        <text>UDP-N-acetyl-alpha-D-muramoyl-L-alanine + D-glutamate + ATP = UDP-N-acetyl-alpha-D-muramoyl-L-alanyl-D-glutamate + ADP + phosphate + H(+)</text>
        <dbReference type="Rhea" id="RHEA:16429"/>
        <dbReference type="ChEBI" id="CHEBI:15378"/>
        <dbReference type="ChEBI" id="CHEBI:29986"/>
        <dbReference type="ChEBI" id="CHEBI:30616"/>
        <dbReference type="ChEBI" id="CHEBI:43474"/>
        <dbReference type="ChEBI" id="CHEBI:83898"/>
        <dbReference type="ChEBI" id="CHEBI:83900"/>
        <dbReference type="ChEBI" id="CHEBI:456216"/>
        <dbReference type="EC" id="6.3.2.9"/>
    </reaction>
</comment>
<comment type="pathway">
    <text evidence="1">Cell wall biogenesis; peptidoglycan biosynthesis.</text>
</comment>
<comment type="subcellular location">
    <subcellularLocation>
        <location evidence="1">Cytoplasm</location>
    </subcellularLocation>
</comment>
<comment type="similarity">
    <text evidence="1">Belongs to the MurCDEF family.</text>
</comment>
<protein>
    <recommendedName>
        <fullName evidence="1">UDP-N-acetylmuramoylalanine--D-glutamate ligase</fullName>
        <ecNumber evidence="1">6.3.2.9</ecNumber>
    </recommendedName>
    <alternativeName>
        <fullName evidence="1">D-glutamic acid-adding enzyme</fullName>
    </alternativeName>
    <alternativeName>
        <fullName evidence="1">UDP-N-acetylmuramoyl-L-alanyl-D-glutamate synthetase</fullName>
    </alternativeName>
</protein>
<evidence type="ECO:0000255" key="1">
    <source>
        <dbReference type="HAMAP-Rule" id="MF_00639"/>
    </source>
</evidence>
<name>MURD_SALPA</name>
<dbReference type="EC" id="6.3.2.9" evidence="1"/>
<dbReference type="EMBL" id="CP000026">
    <property type="protein sequence ID" value="AAV76161.1"/>
    <property type="molecule type" value="Genomic_DNA"/>
</dbReference>
<dbReference type="RefSeq" id="WP_000796443.1">
    <property type="nucleotide sequence ID" value="NC_006511.1"/>
</dbReference>
<dbReference type="SMR" id="Q5PDC2"/>
<dbReference type="KEGG" id="spt:SPA0128"/>
<dbReference type="HOGENOM" id="CLU_032540_1_0_6"/>
<dbReference type="UniPathway" id="UPA00219"/>
<dbReference type="Proteomes" id="UP000008185">
    <property type="component" value="Chromosome"/>
</dbReference>
<dbReference type="GO" id="GO:0005737">
    <property type="term" value="C:cytoplasm"/>
    <property type="evidence" value="ECO:0007669"/>
    <property type="project" value="UniProtKB-SubCell"/>
</dbReference>
<dbReference type="GO" id="GO:0005524">
    <property type="term" value="F:ATP binding"/>
    <property type="evidence" value="ECO:0007669"/>
    <property type="project" value="UniProtKB-UniRule"/>
</dbReference>
<dbReference type="GO" id="GO:0008764">
    <property type="term" value="F:UDP-N-acetylmuramoylalanine-D-glutamate ligase activity"/>
    <property type="evidence" value="ECO:0007669"/>
    <property type="project" value="UniProtKB-UniRule"/>
</dbReference>
<dbReference type="GO" id="GO:0051301">
    <property type="term" value="P:cell division"/>
    <property type="evidence" value="ECO:0007669"/>
    <property type="project" value="UniProtKB-KW"/>
</dbReference>
<dbReference type="GO" id="GO:0071555">
    <property type="term" value="P:cell wall organization"/>
    <property type="evidence" value="ECO:0007669"/>
    <property type="project" value="UniProtKB-KW"/>
</dbReference>
<dbReference type="GO" id="GO:0009252">
    <property type="term" value="P:peptidoglycan biosynthetic process"/>
    <property type="evidence" value="ECO:0007669"/>
    <property type="project" value="UniProtKB-UniRule"/>
</dbReference>
<dbReference type="GO" id="GO:0008360">
    <property type="term" value="P:regulation of cell shape"/>
    <property type="evidence" value="ECO:0007669"/>
    <property type="project" value="UniProtKB-KW"/>
</dbReference>
<dbReference type="FunFam" id="3.40.1190.10:FF:000002">
    <property type="entry name" value="UDP-N-acetylmuramoylalanine--D-glutamate ligase"/>
    <property type="match status" value="1"/>
</dbReference>
<dbReference type="FunFam" id="3.40.50.720:FF:000126">
    <property type="entry name" value="UDP-N-acetylmuramoylalanine--D-glutamate ligase"/>
    <property type="match status" value="1"/>
</dbReference>
<dbReference type="FunFam" id="3.90.190.20:FF:000003">
    <property type="entry name" value="UDP-N-acetylmuramoylalanine--D-glutamate ligase"/>
    <property type="match status" value="1"/>
</dbReference>
<dbReference type="Gene3D" id="3.90.190.20">
    <property type="entry name" value="Mur ligase, C-terminal domain"/>
    <property type="match status" value="1"/>
</dbReference>
<dbReference type="Gene3D" id="3.40.1190.10">
    <property type="entry name" value="Mur-like, catalytic domain"/>
    <property type="match status" value="1"/>
</dbReference>
<dbReference type="Gene3D" id="3.40.50.720">
    <property type="entry name" value="NAD(P)-binding Rossmann-like Domain"/>
    <property type="match status" value="1"/>
</dbReference>
<dbReference type="HAMAP" id="MF_00639">
    <property type="entry name" value="MurD"/>
    <property type="match status" value="1"/>
</dbReference>
<dbReference type="InterPro" id="IPR036565">
    <property type="entry name" value="Mur-like_cat_sf"/>
</dbReference>
<dbReference type="InterPro" id="IPR004101">
    <property type="entry name" value="Mur_ligase_C"/>
</dbReference>
<dbReference type="InterPro" id="IPR036615">
    <property type="entry name" value="Mur_ligase_C_dom_sf"/>
</dbReference>
<dbReference type="InterPro" id="IPR013221">
    <property type="entry name" value="Mur_ligase_cen"/>
</dbReference>
<dbReference type="InterPro" id="IPR005762">
    <property type="entry name" value="MurD"/>
</dbReference>
<dbReference type="NCBIfam" id="TIGR01087">
    <property type="entry name" value="murD"/>
    <property type="match status" value="1"/>
</dbReference>
<dbReference type="PANTHER" id="PTHR43692">
    <property type="entry name" value="UDP-N-ACETYLMURAMOYLALANINE--D-GLUTAMATE LIGASE"/>
    <property type="match status" value="1"/>
</dbReference>
<dbReference type="PANTHER" id="PTHR43692:SF1">
    <property type="entry name" value="UDP-N-ACETYLMURAMOYLALANINE--D-GLUTAMATE LIGASE"/>
    <property type="match status" value="1"/>
</dbReference>
<dbReference type="Pfam" id="PF02875">
    <property type="entry name" value="Mur_ligase_C"/>
    <property type="match status" value="1"/>
</dbReference>
<dbReference type="Pfam" id="PF08245">
    <property type="entry name" value="Mur_ligase_M"/>
    <property type="match status" value="1"/>
</dbReference>
<dbReference type="Pfam" id="PF21799">
    <property type="entry name" value="MurD-like_N"/>
    <property type="match status" value="1"/>
</dbReference>
<dbReference type="SUPFAM" id="SSF51984">
    <property type="entry name" value="MurCD N-terminal domain"/>
    <property type="match status" value="1"/>
</dbReference>
<dbReference type="SUPFAM" id="SSF53623">
    <property type="entry name" value="MurD-like peptide ligases, catalytic domain"/>
    <property type="match status" value="1"/>
</dbReference>
<dbReference type="SUPFAM" id="SSF53244">
    <property type="entry name" value="MurD-like peptide ligases, peptide-binding domain"/>
    <property type="match status" value="1"/>
</dbReference>
<organism>
    <name type="scientific">Salmonella paratyphi A (strain ATCC 9150 / SARB42)</name>
    <dbReference type="NCBI Taxonomy" id="295319"/>
    <lineage>
        <taxon>Bacteria</taxon>
        <taxon>Pseudomonadati</taxon>
        <taxon>Pseudomonadota</taxon>
        <taxon>Gammaproteobacteria</taxon>
        <taxon>Enterobacterales</taxon>
        <taxon>Enterobacteriaceae</taxon>
        <taxon>Salmonella</taxon>
    </lineage>
</organism>
<gene>
    <name evidence="1" type="primary">murD</name>
    <name type="ordered locus">SPA0128</name>
</gene>
<reference key="1">
    <citation type="journal article" date="2004" name="Nat. Genet.">
        <title>Comparison of genome degradation in Paratyphi A and Typhi, human-restricted serovars of Salmonella enterica that cause typhoid.</title>
        <authorList>
            <person name="McClelland M."/>
            <person name="Sanderson K.E."/>
            <person name="Clifton S.W."/>
            <person name="Latreille P."/>
            <person name="Porwollik S."/>
            <person name="Sabo A."/>
            <person name="Meyer R."/>
            <person name="Bieri T."/>
            <person name="Ozersky P."/>
            <person name="McLellan M."/>
            <person name="Harkins C.R."/>
            <person name="Wang C."/>
            <person name="Nguyen C."/>
            <person name="Berghoff A."/>
            <person name="Elliott G."/>
            <person name="Kohlberg S."/>
            <person name="Strong C."/>
            <person name="Du F."/>
            <person name="Carter J."/>
            <person name="Kremizki C."/>
            <person name="Layman D."/>
            <person name="Leonard S."/>
            <person name="Sun H."/>
            <person name="Fulton L."/>
            <person name="Nash W."/>
            <person name="Miner T."/>
            <person name="Minx P."/>
            <person name="Delehaunty K."/>
            <person name="Fronick C."/>
            <person name="Magrini V."/>
            <person name="Nhan M."/>
            <person name="Warren W."/>
            <person name="Florea L."/>
            <person name="Spieth J."/>
            <person name="Wilson R.K."/>
        </authorList>
    </citation>
    <scope>NUCLEOTIDE SEQUENCE [LARGE SCALE GENOMIC DNA]</scope>
    <source>
        <strain>ATCC 9150 / SARB42</strain>
    </source>
</reference>
<proteinExistence type="inferred from homology"/>
<accession>Q5PDC2</accession>
<feature type="chain" id="PRO_0000109076" description="UDP-N-acetylmuramoylalanine--D-glutamate ligase">
    <location>
        <begin position="1"/>
        <end position="438"/>
    </location>
</feature>
<feature type="binding site" evidence="1">
    <location>
        <begin position="112"/>
        <end position="118"/>
    </location>
    <ligand>
        <name>ATP</name>
        <dbReference type="ChEBI" id="CHEBI:30616"/>
    </ligand>
</feature>
<keyword id="KW-0067">ATP-binding</keyword>
<keyword id="KW-0131">Cell cycle</keyword>
<keyword id="KW-0132">Cell division</keyword>
<keyword id="KW-0133">Cell shape</keyword>
<keyword id="KW-0961">Cell wall biogenesis/degradation</keyword>
<keyword id="KW-0963">Cytoplasm</keyword>
<keyword id="KW-0436">Ligase</keyword>
<keyword id="KW-0547">Nucleotide-binding</keyword>
<keyword id="KW-0573">Peptidoglycan synthesis</keyword>
<sequence length="438" mass="46968">MADYQDKNVVIIGLGLTGLSCVDFFLARGVTPRVMDTRVTPPGLDKLPQEVERHVGGLNDEWLLAADLIVASPGIALAHPSLSAAASAGVEIVGDIELFCREAQAPIVAITGSNGKSTVTTLVGEMAKAAGVNVGVGGNIGLPALMLLDADRELYVLELSSFQLETTSSLQAAAATVLNVTEDHMDRYPFGLQQYRAAKLRVYEKAKVCVVNADDALTMPVRGADERCVSFGVNMGDYHLNRQQGETWLRVKGEKVLNVKEMKLSGQHNYTNALAALALADAVGLPRASSLKALTTFTGLAHRFQLALEHNGVRWINDSKATNVGSTEAALNGLHVDGTLHLLLGGDGKSADFSPLARYLTGDRIRLYCFGRDGAQLAALRPEIAQQTETMEEAMRLLAPRVQPGDMVLLSPACASLDQFKNFEQRGDVFTRLAKELG</sequence>